<accession>Q62393</accession>
<accession>Q545M5</accession>
<accession>Q8CCU1</accession>
<accession>Q8K564</accession>
<accession>Q99KP8</accession>
<reference key="1">
    <citation type="journal article" date="1996" name="Genomics">
        <title>Definition of the tumor protein D52 (TPD52) gene family through cloning of D52 homologues in human (hD53) and mouse (mD52).</title>
        <authorList>
            <person name="Byrne J.A."/>
            <person name="Mattei M.-G."/>
            <person name="Basset P."/>
        </authorList>
    </citation>
    <scope>NUCLEOTIDE SEQUENCE [MRNA] (ISOFORM 2)</scope>
    <source>
        <tissue>Mammary gland</tissue>
    </source>
</reference>
<reference key="2">
    <citation type="submission" date="2001-07" db="EMBL/GenBank/DDBJ databases">
        <title>Cloning and characterization of PC-1 homolog in Mouse (mPC-1).</title>
        <authorList>
            <person name="Zhou J.-G."/>
            <person name="Huang C.-F."/>
        </authorList>
    </citation>
    <scope>NUCLEOTIDE SEQUENCE [MRNA] (ISOFORM 1)</scope>
</reference>
<reference key="3">
    <citation type="journal article" date="2005" name="Science">
        <title>The transcriptional landscape of the mammalian genome.</title>
        <authorList>
            <person name="Carninci P."/>
            <person name="Kasukawa T."/>
            <person name="Katayama S."/>
            <person name="Gough J."/>
            <person name="Frith M.C."/>
            <person name="Maeda N."/>
            <person name="Oyama R."/>
            <person name="Ravasi T."/>
            <person name="Lenhard B."/>
            <person name="Wells C."/>
            <person name="Kodzius R."/>
            <person name="Shimokawa K."/>
            <person name="Bajic V.B."/>
            <person name="Brenner S.E."/>
            <person name="Batalov S."/>
            <person name="Forrest A.R."/>
            <person name="Zavolan M."/>
            <person name="Davis M.J."/>
            <person name="Wilming L.G."/>
            <person name="Aidinis V."/>
            <person name="Allen J.E."/>
            <person name="Ambesi-Impiombato A."/>
            <person name="Apweiler R."/>
            <person name="Aturaliya R.N."/>
            <person name="Bailey T.L."/>
            <person name="Bansal M."/>
            <person name="Baxter L."/>
            <person name="Beisel K.W."/>
            <person name="Bersano T."/>
            <person name="Bono H."/>
            <person name="Chalk A.M."/>
            <person name="Chiu K.P."/>
            <person name="Choudhary V."/>
            <person name="Christoffels A."/>
            <person name="Clutterbuck D.R."/>
            <person name="Crowe M.L."/>
            <person name="Dalla E."/>
            <person name="Dalrymple B.P."/>
            <person name="de Bono B."/>
            <person name="Della Gatta G."/>
            <person name="di Bernardo D."/>
            <person name="Down T."/>
            <person name="Engstrom P."/>
            <person name="Fagiolini M."/>
            <person name="Faulkner G."/>
            <person name="Fletcher C.F."/>
            <person name="Fukushima T."/>
            <person name="Furuno M."/>
            <person name="Futaki S."/>
            <person name="Gariboldi M."/>
            <person name="Georgii-Hemming P."/>
            <person name="Gingeras T.R."/>
            <person name="Gojobori T."/>
            <person name="Green R.E."/>
            <person name="Gustincich S."/>
            <person name="Harbers M."/>
            <person name="Hayashi Y."/>
            <person name="Hensch T.K."/>
            <person name="Hirokawa N."/>
            <person name="Hill D."/>
            <person name="Huminiecki L."/>
            <person name="Iacono M."/>
            <person name="Ikeo K."/>
            <person name="Iwama A."/>
            <person name="Ishikawa T."/>
            <person name="Jakt M."/>
            <person name="Kanapin A."/>
            <person name="Katoh M."/>
            <person name="Kawasawa Y."/>
            <person name="Kelso J."/>
            <person name="Kitamura H."/>
            <person name="Kitano H."/>
            <person name="Kollias G."/>
            <person name="Krishnan S.P."/>
            <person name="Kruger A."/>
            <person name="Kummerfeld S.K."/>
            <person name="Kurochkin I.V."/>
            <person name="Lareau L.F."/>
            <person name="Lazarevic D."/>
            <person name="Lipovich L."/>
            <person name="Liu J."/>
            <person name="Liuni S."/>
            <person name="McWilliam S."/>
            <person name="Madan Babu M."/>
            <person name="Madera M."/>
            <person name="Marchionni L."/>
            <person name="Matsuda H."/>
            <person name="Matsuzawa S."/>
            <person name="Miki H."/>
            <person name="Mignone F."/>
            <person name="Miyake S."/>
            <person name="Morris K."/>
            <person name="Mottagui-Tabar S."/>
            <person name="Mulder N."/>
            <person name="Nakano N."/>
            <person name="Nakauchi H."/>
            <person name="Ng P."/>
            <person name="Nilsson R."/>
            <person name="Nishiguchi S."/>
            <person name="Nishikawa S."/>
            <person name="Nori F."/>
            <person name="Ohara O."/>
            <person name="Okazaki Y."/>
            <person name="Orlando V."/>
            <person name="Pang K.C."/>
            <person name="Pavan W.J."/>
            <person name="Pavesi G."/>
            <person name="Pesole G."/>
            <person name="Petrovsky N."/>
            <person name="Piazza S."/>
            <person name="Reed J."/>
            <person name="Reid J.F."/>
            <person name="Ring B.Z."/>
            <person name="Ringwald M."/>
            <person name="Rost B."/>
            <person name="Ruan Y."/>
            <person name="Salzberg S.L."/>
            <person name="Sandelin A."/>
            <person name="Schneider C."/>
            <person name="Schoenbach C."/>
            <person name="Sekiguchi K."/>
            <person name="Semple C.A."/>
            <person name="Seno S."/>
            <person name="Sessa L."/>
            <person name="Sheng Y."/>
            <person name="Shibata Y."/>
            <person name="Shimada H."/>
            <person name="Shimada K."/>
            <person name="Silva D."/>
            <person name="Sinclair B."/>
            <person name="Sperling S."/>
            <person name="Stupka E."/>
            <person name="Sugiura K."/>
            <person name="Sultana R."/>
            <person name="Takenaka Y."/>
            <person name="Taki K."/>
            <person name="Tammoja K."/>
            <person name="Tan S.L."/>
            <person name="Tang S."/>
            <person name="Taylor M.S."/>
            <person name="Tegner J."/>
            <person name="Teichmann S.A."/>
            <person name="Ueda H.R."/>
            <person name="van Nimwegen E."/>
            <person name="Verardo R."/>
            <person name="Wei C.L."/>
            <person name="Yagi K."/>
            <person name="Yamanishi H."/>
            <person name="Zabarovsky E."/>
            <person name="Zhu S."/>
            <person name="Zimmer A."/>
            <person name="Hide W."/>
            <person name="Bult C."/>
            <person name="Grimmond S.M."/>
            <person name="Teasdale R.D."/>
            <person name="Liu E.T."/>
            <person name="Brusic V."/>
            <person name="Quackenbush J."/>
            <person name="Wahlestedt C."/>
            <person name="Mattick J.S."/>
            <person name="Hume D.A."/>
            <person name="Kai C."/>
            <person name="Sasaki D."/>
            <person name="Tomaru Y."/>
            <person name="Fukuda S."/>
            <person name="Kanamori-Katayama M."/>
            <person name="Suzuki M."/>
            <person name="Aoki J."/>
            <person name="Arakawa T."/>
            <person name="Iida J."/>
            <person name="Imamura K."/>
            <person name="Itoh M."/>
            <person name="Kato T."/>
            <person name="Kawaji H."/>
            <person name="Kawagashira N."/>
            <person name="Kawashima T."/>
            <person name="Kojima M."/>
            <person name="Kondo S."/>
            <person name="Konno H."/>
            <person name="Nakano K."/>
            <person name="Ninomiya N."/>
            <person name="Nishio T."/>
            <person name="Okada M."/>
            <person name="Plessy C."/>
            <person name="Shibata K."/>
            <person name="Shiraki T."/>
            <person name="Suzuki S."/>
            <person name="Tagami M."/>
            <person name="Waki K."/>
            <person name="Watahiki A."/>
            <person name="Okamura-Oho Y."/>
            <person name="Suzuki H."/>
            <person name="Kawai J."/>
            <person name="Hayashizaki Y."/>
        </authorList>
    </citation>
    <scope>NUCLEOTIDE SEQUENCE [LARGE SCALE MRNA] (ISOFORMS 2 AND 3)</scope>
    <source>
        <strain>C57BL/6J</strain>
        <strain>NOD</strain>
        <tissue>Amnion</tissue>
        <tissue>Bone marrow macrophage</tissue>
        <tissue>Dendritic cell</tissue>
        <tissue>Medulla oblongata</tissue>
        <tissue>Placenta</tissue>
        <tissue>Thymus</tissue>
    </source>
</reference>
<reference key="4">
    <citation type="submission" date="2005-09" db="EMBL/GenBank/DDBJ databases">
        <authorList>
            <person name="Mural R.J."/>
            <person name="Adams M.D."/>
            <person name="Myers E.W."/>
            <person name="Smith H.O."/>
            <person name="Venter J.C."/>
        </authorList>
    </citation>
    <scope>NUCLEOTIDE SEQUENCE [LARGE SCALE GENOMIC DNA]</scope>
</reference>
<reference key="5">
    <citation type="journal article" date="2004" name="Genome Res.">
        <title>The status, quality, and expansion of the NIH full-length cDNA project: the Mammalian Gene Collection (MGC).</title>
        <authorList>
            <consortium name="The MGC Project Team"/>
        </authorList>
    </citation>
    <scope>NUCLEOTIDE SEQUENCE [LARGE SCALE MRNA] (ISOFORM 2)</scope>
    <source>
        <strain>Czech II</strain>
        <strain>FVB/N</strain>
        <tissue>Mammary gland</tissue>
    </source>
</reference>
<reference key="6">
    <citation type="submission" date="2009-01" db="UniProtKB">
        <authorList>
            <person name="Lubec G."/>
            <person name="Sunyer B."/>
            <person name="Chen W.-Q."/>
        </authorList>
    </citation>
    <scope>PROTEIN SEQUENCE OF 110-123</scope>
    <scope>IDENTIFICATION BY MASS SPECTROMETRY</scope>
    <source>
        <strain>OF1</strain>
        <tissue>Hippocampus</tissue>
    </source>
</reference>
<reference key="7">
    <citation type="journal article" date="1996" name="Oncogene">
        <title>Isolation and characterization of a novel gene expressed in multiple cancers.</title>
        <authorList>
            <person name="Chen S.-L."/>
            <person name="Maroulakou I.G."/>
            <person name="Green J.E."/>
            <person name="Romano-Spica V."/>
            <person name="Modi W."/>
            <person name="Lautenberger J."/>
            <person name="Bhat N.K."/>
        </authorList>
    </citation>
    <scope>TISSUE SPECIFICITY</scope>
</reference>
<reference key="8">
    <citation type="journal article" date="2010" name="Cell">
        <title>A tissue-specific atlas of mouse protein phosphorylation and expression.</title>
        <authorList>
            <person name="Huttlin E.L."/>
            <person name="Jedrychowski M.P."/>
            <person name="Elias J.E."/>
            <person name="Goswami T."/>
            <person name="Rad R."/>
            <person name="Beausoleil S.A."/>
            <person name="Villen J."/>
            <person name="Haas W."/>
            <person name="Sowa M.E."/>
            <person name="Gygi S.P."/>
        </authorList>
    </citation>
    <scope>PHOSPHORYLATION [LARGE SCALE ANALYSIS] AT THR-35; SER-36; SER-40 AND SER-175</scope>
    <scope>PHOSPHORYLATION [LARGE SCALE ANALYSIS] AT SER-138 (ISOFORM 3)</scope>
    <scope>IDENTIFICATION BY MASS SPECTROMETRY [LARGE SCALE ANALYSIS]</scope>
    <source>
        <tissue>Brain</tissue>
        <tissue>Brown adipose tissue</tissue>
        <tissue>Heart</tissue>
        <tissue>Kidney</tissue>
        <tissue>Liver</tissue>
        <tissue>Lung</tissue>
        <tissue>Pancreas</tissue>
        <tissue>Spleen</tissue>
        <tissue>Testis</tissue>
    </source>
</reference>
<organism>
    <name type="scientific">Mus musculus</name>
    <name type="common">Mouse</name>
    <dbReference type="NCBI Taxonomy" id="10090"/>
    <lineage>
        <taxon>Eukaryota</taxon>
        <taxon>Metazoa</taxon>
        <taxon>Chordata</taxon>
        <taxon>Craniata</taxon>
        <taxon>Vertebrata</taxon>
        <taxon>Euteleostomi</taxon>
        <taxon>Mammalia</taxon>
        <taxon>Eutheria</taxon>
        <taxon>Euarchontoglires</taxon>
        <taxon>Glires</taxon>
        <taxon>Rodentia</taxon>
        <taxon>Myomorpha</taxon>
        <taxon>Muroidea</taxon>
        <taxon>Muridae</taxon>
        <taxon>Murinae</taxon>
        <taxon>Mus</taxon>
        <taxon>Mus</taxon>
    </lineage>
</organism>
<proteinExistence type="evidence at protein level"/>
<protein>
    <recommendedName>
        <fullName>Tumor protein D52</fullName>
        <shortName>mD52</shortName>
    </recommendedName>
</protein>
<evidence type="ECO:0000250" key="1"/>
<evidence type="ECO:0000250" key="2">
    <source>
        <dbReference type="UniProtKB" id="P55327"/>
    </source>
</evidence>
<evidence type="ECO:0000255" key="3"/>
<evidence type="ECO:0000256" key="4">
    <source>
        <dbReference type="SAM" id="MobiDB-lite"/>
    </source>
</evidence>
<evidence type="ECO:0000269" key="5">
    <source>
    </source>
</evidence>
<evidence type="ECO:0000303" key="6">
    <source>
    </source>
</evidence>
<evidence type="ECO:0000303" key="7">
    <source>
    </source>
</evidence>
<evidence type="ECO:0000303" key="8">
    <source>
    </source>
</evidence>
<evidence type="ECO:0000305" key="9"/>
<evidence type="ECO:0007744" key="10">
    <source>
    </source>
</evidence>
<name>TPD52_MOUSE</name>
<sequence>MECRDMELADDYQSPFDFDSGVNKNYLYLSPSGNTSPPGSPTQNVGLLKTEPVAEEGEDAVTMLSAPEALTEEEQEELRRELTKVEEEIQTLSQVLAAKEKHLAELKRKLGISSLQEFKQNIAKGWQDVTATNAYKKTSETLSQAGQKASAAFSSVGSVITKKLEDVKNSPTFKSFEEKVENLKSKVGGAKPAGGDFGEVLNSTANATSTMTTEPPPEQMTESP</sequence>
<comment type="subunit">
    <text evidence="1">Forms a homodimer or heterodimer with other members of the family.</text>
</comment>
<comment type="interaction">
    <interactant intactId="EBI-782591">
        <id>Q62393</id>
    </interactant>
    <interactant intactId="EBI-782581">
        <id>P55327</id>
        <label>TPD52</label>
    </interactant>
    <organismsDiffer>true</organismsDiffer>
    <experiments>2</experiments>
</comment>
<comment type="interaction">
    <interactant intactId="EBI-782591">
        <id>Q62393</id>
    </interactant>
    <interactant intactId="EBI-717470">
        <id>Q16890</id>
        <label>TPD52L1</label>
    </interactant>
    <organismsDiffer>true</organismsDiffer>
    <experiments>3</experiments>
</comment>
<comment type="interaction">
    <interactant intactId="EBI-782591">
        <id>Q62393</id>
    </interactant>
    <interactant intactId="EBI-782616">
        <id>O43399-2</id>
        <label>TPD52L2</label>
    </interactant>
    <organismsDiffer>true</organismsDiffer>
    <experiments>2</experiments>
</comment>
<comment type="alternative products">
    <event type="alternative splicing"/>
    <isoform>
        <id>Q62393-1</id>
        <name>1</name>
        <sequence type="displayed"/>
    </isoform>
    <isoform>
        <id>Q62393-2</id>
        <name>2</name>
        <sequence type="described" ref="VSP_037379"/>
    </isoform>
    <isoform>
        <id>Q62393-3</id>
        <name>3</name>
        <sequence type="described" ref="VSP_037379 VSP_037380"/>
    </isoform>
</comment>
<comment type="tissue specificity">
    <text evidence="5">Isoform 2 is expressed at higher levels in kidney and brain than in liver, lung, testis and heart. Within the brain, isoform 2 is highly expressed in the granular layer of the cerebellum, the cortex and the hippocampus. In embryos, isoform 2 is expressed in the epithelium of the developing intestine, stomach, olfactory epithelium, neuronal layers of the retina, salivary gland, kidney and dorsal root ganglion.</text>
</comment>
<comment type="similarity">
    <text evidence="9">Belongs to the TPD52 family.</text>
</comment>
<keyword id="KW-0025">Alternative splicing</keyword>
<keyword id="KW-0175">Coiled coil</keyword>
<keyword id="KW-0903">Direct protein sequencing</keyword>
<keyword id="KW-0597">Phosphoprotein</keyword>
<keyword id="KW-1185">Reference proteome</keyword>
<feature type="chain" id="PRO_0000185739" description="Tumor protein D52">
    <location>
        <begin position="1"/>
        <end position="224"/>
    </location>
</feature>
<feature type="region of interest" description="Disordered" evidence="4">
    <location>
        <begin position="29"/>
        <end position="53"/>
    </location>
</feature>
<feature type="region of interest" description="Disordered" evidence="4">
    <location>
        <begin position="186"/>
        <end position="224"/>
    </location>
</feature>
<feature type="coiled-coil region" evidence="3">
    <location>
        <begin position="61"/>
        <end position="113"/>
    </location>
</feature>
<feature type="compositionally biased region" description="Low complexity" evidence="4">
    <location>
        <begin position="202"/>
        <end position="224"/>
    </location>
</feature>
<feature type="modified residue" description="Phosphothreonine" evidence="10">
    <location>
        <position position="35"/>
    </location>
</feature>
<feature type="modified residue" description="Phosphoserine" evidence="10">
    <location>
        <position position="36"/>
    </location>
</feature>
<feature type="modified residue" description="Phosphoserine" evidence="10">
    <location>
        <position position="40"/>
    </location>
</feature>
<feature type="modified residue" description="Phosphoserine" evidence="10">
    <location>
        <position position="175"/>
    </location>
</feature>
<feature type="modified residue" description="Phosphoserine" evidence="2">
    <location>
        <position position="223"/>
    </location>
</feature>
<feature type="splice variant" id="VSP_037379" description="In isoform 2 and isoform 3." evidence="6 7 8">
    <original>MECRDMELADDYQSPFDFDSGVNKNYLYLSPSGNTSPPGSPTQNV</original>
    <variation>MDRGEQ</variation>
    <location>
        <begin position="1"/>
        <end position="45"/>
    </location>
</feature>
<feature type="splice variant" id="VSP_037380" description="In isoform 3." evidence="7">
    <original>K</original>
    <variation>NIRSIQHSISMPAMR</variation>
    <location>
        <position position="168"/>
    </location>
</feature>
<feature type="sequence conflict" description="In Ref. 5; AAH04068." evidence="9" ref="5">
    <original>V</original>
    <variation>L</variation>
    <location>
        <position position="129"/>
    </location>
</feature>
<feature type="modified residue" description="Phosphoserine" evidence="10">
    <location sequence="Q62393-3">
        <position position="138"/>
    </location>
</feature>
<gene>
    <name type="primary">Tpd52</name>
</gene>
<dbReference type="EMBL" id="U44426">
    <property type="protein sequence ID" value="AAB40897.1"/>
    <property type="molecule type" value="mRNA"/>
</dbReference>
<dbReference type="EMBL" id="AY048852">
    <property type="protein sequence ID" value="AAL05266.1"/>
    <property type="molecule type" value="mRNA"/>
</dbReference>
<dbReference type="EMBL" id="AK005456">
    <property type="protein sequence ID" value="BAB24048.1"/>
    <property type="molecule type" value="mRNA"/>
</dbReference>
<dbReference type="EMBL" id="AK032111">
    <property type="protein sequence ID" value="BAC27709.1"/>
    <property type="molecule type" value="mRNA"/>
</dbReference>
<dbReference type="EMBL" id="AK151471">
    <property type="protein sequence ID" value="BAE30428.1"/>
    <property type="molecule type" value="mRNA"/>
</dbReference>
<dbReference type="EMBL" id="AK151744">
    <property type="protein sequence ID" value="BAE30655.1"/>
    <property type="molecule type" value="mRNA"/>
</dbReference>
<dbReference type="EMBL" id="AK152543">
    <property type="protein sequence ID" value="BAE31298.1"/>
    <property type="molecule type" value="mRNA"/>
</dbReference>
<dbReference type="EMBL" id="AK153266">
    <property type="protein sequence ID" value="BAE31856.1"/>
    <property type="molecule type" value="mRNA"/>
</dbReference>
<dbReference type="EMBL" id="AK153292">
    <property type="protein sequence ID" value="BAE31875.1"/>
    <property type="molecule type" value="mRNA"/>
</dbReference>
<dbReference type="EMBL" id="AK161753">
    <property type="protein sequence ID" value="BAE36558.1"/>
    <property type="molecule type" value="mRNA"/>
</dbReference>
<dbReference type="EMBL" id="AK168379">
    <property type="protein sequence ID" value="BAE40308.1"/>
    <property type="molecule type" value="mRNA"/>
</dbReference>
<dbReference type="EMBL" id="AK168817">
    <property type="protein sequence ID" value="BAE40644.1"/>
    <property type="molecule type" value="mRNA"/>
</dbReference>
<dbReference type="EMBL" id="AK169751">
    <property type="protein sequence ID" value="BAE41345.1"/>
    <property type="molecule type" value="mRNA"/>
</dbReference>
<dbReference type="EMBL" id="AK170725">
    <property type="protein sequence ID" value="BAE41982.1"/>
    <property type="molecule type" value="mRNA"/>
</dbReference>
<dbReference type="EMBL" id="AK171050">
    <property type="protein sequence ID" value="BAE42212.1"/>
    <property type="molecule type" value="mRNA"/>
</dbReference>
<dbReference type="EMBL" id="CH466577">
    <property type="protein sequence ID" value="EDL05193.1"/>
    <property type="molecule type" value="Genomic_DNA"/>
</dbReference>
<dbReference type="EMBL" id="BC002036">
    <property type="protein sequence ID" value="AAH02036.1"/>
    <property type="molecule type" value="mRNA"/>
</dbReference>
<dbReference type="EMBL" id="BC004068">
    <property type="protein sequence ID" value="AAH04068.1"/>
    <property type="molecule type" value="mRNA"/>
</dbReference>
<dbReference type="EMBL" id="BC094018">
    <property type="protein sequence ID" value="AAH94018.1"/>
    <property type="molecule type" value="mRNA"/>
</dbReference>
<dbReference type="CCDS" id="CCDS38384.1">
    <molecule id="Q62393-3"/>
</dbReference>
<dbReference type="CCDS" id="CCDS38386.1">
    <molecule id="Q62393-1"/>
</dbReference>
<dbReference type="CCDS" id="CCDS50860.1">
    <molecule id="Q62393-2"/>
</dbReference>
<dbReference type="RefSeq" id="NP_001020433.1">
    <molecule id="Q62393-1"/>
    <property type="nucleotide sequence ID" value="NM_001025262.3"/>
</dbReference>
<dbReference type="RefSeq" id="NP_001020434.1">
    <molecule id="Q62393-3"/>
    <property type="nucleotide sequence ID" value="NM_001025263.3"/>
</dbReference>
<dbReference type="RefSeq" id="NP_033438.1">
    <molecule id="Q62393-2"/>
    <property type="nucleotide sequence ID" value="NM_009412.4"/>
</dbReference>
<dbReference type="SMR" id="Q62393"/>
<dbReference type="BioGRID" id="204287">
    <property type="interactions" value="11"/>
</dbReference>
<dbReference type="FunCoup" id="Q62393">
    <property type="interactions" value="1500"/>
</dbReference>
<dbReference type="IntAct" id="Q62393">
    <property type="interactions" value="4"/>
</dbReference>
<dbReference type="STRING" id="10090.ENSMUSP00000091943"/>
<dbReference type="iPTMnet" id="Q62393"/>
<dbReference type="PhosphoSitePlus" id="Q62393"/>
<dbReference type="jPOST" id="Q62393"/>
<dbReference type="PaxDb" id="10090-ENSMUSP00000091943"/>
<dbReference type="PeptideAtlas" id="Q62393"/>
<dbReference type="ProteomicsDB" id="297501">
    <molecule id="Q62393-1"/>
</dbReference>
<dbReference type="ProteomicsDB" id="297502">
    <molecule id="Q62393-2"/>
</dbReference>
<dbReference type="ProteomicsDB" id="297503">
    <molecule id="Q62393-3"/>
</dbReference>
<dbReference type="DNASU" id="21985"/>
<dbReference type="Ensembl" id="ENSMUST00000091354.12">
    <molecule id="Q62393-1"/>
    <property type="protein sequence ID" value="ENSMUSP00000088913.6"/>
    <property type="gene ID" value="ENSMUSG00000027506.16"/>
</dbReference>
<dbReference type="Ensembl" id="ENSMUST00000091355.12">
    <molecule id="Q62393-3"/>
    <property type="protein sequence ID" value="ENSMUSP00000088914.6"/>
    <property type="gene ID" value="ENSMUSG00000027506.16"/>
</dbReference>
<dbReference type="Ensembl" id="ENSMUST00000120143.8">
    <molecule id="Q62393-2"/>
    <property type="protein sequence ID" value="ENSMUSP00000112830.2"/>
    <property type="gene ID" value="ENSMUSG00000027506.16"/>
</dbReference>
<dbReference type="GeneID" id="21985"/>
<dbReference type="KEGG" id="mmu:21985"/>
<dbReference type="UCSC" id="uc008oos.1">
    <molecule id="Q62393-1"/>
    <property type="organism name" value="mouse"/>
</dbReference>
<dbReference type="UCSC" id="uc008oot.1">
    <molecule id="Q62393-3"/>
    <property type="organism name" value="mouse"/>
</dbReference>
<dbReference type="UCSC" id="uc008oov.1">
    <molecule id="Q62393-2"/>
    <property type="organism name" value="mouse"/>
</dbReference>
<dbReference type="AGR" id="MGI:107749"/>
<dbReference type="CTD" id="7163"/>
<dbReference type="MGI" id="MGI:107749">
    <property type="gene designation" value="Tpd52"/>
</dbReference>
<dbReference type="VEuPathDB" id="HostDB:ENSMUSG00000027506"/>
<dbReference type="eggNOG" id="KOG4010">
    <property type="taxonomic scope" value="Eukaryota"/>
</dbReference>
<dbReference type="GeneTree" id="ENSGT00940000155294"/>
<dbReference type="InParanoid" id="Q62393"/>
<dbReference type="OrthoDB" id="10000687at2759"/>
<dbReference type="PhylomeDB" id="Q62393"/>
<dbReference type="Reactome" id="R-MMU-432722">
    <property type="pathway name" value="Golgi Associated Vesicle Biogenesis"/>
</dbReference>
<dbReference type="BioGRID-ORCS" id="21985">
    <property type="hits" value="6 hits in 77 CRISPR screens"/>
</dbReference>
<dbReference type="ChiTaRS" id="Tpd52">
    <property type="organism name" value="mouse"/>
</dbReference>
<dbReference type="PRO" id="PR:Q62393"/>
<dbReference type="Proteomes" id="UP000000589">
    <property type="component" value="Chromosome 3"/>
</dbReference>
<dbReference type="RNAct" id="Q62393">
    <property type="molecule type" value="protein"/>
</dbReference>
<dbReference type="Bgee" id="ENSMUSG00000027506">
    <property type="expression patterns" value="Expressed in prostate gland ventral lobe and 292 other cell types or tissues"/>
</dbReference>
<dbReference type="ExpressionAtlas" id="Q62393">
    <property type="expression patterns" value="baseline and differential"/>
</dbReference>
<dbReference type="GO" id="GO:0005737">
    <property type="term" value="C:cytoplasm"/>
    <property type="evidence" value="ECO:0000250"/>
    <property type="project" value="UniProtKB"/>
</dbReference>
<dbReference type="GO" id="GO:0005783">
    <property type="term" value="C:endoplasmic reticulum"/>
    <property type="evidence" value="ECO:0000250"/>
    <property type="project" value="UniProtKB"/>
</dbReference>
<dbReference type="GO" id="GO:0098978">
    <property type="term" value="C:glutamatergic synapse"/>
    <property type="evidence" value="ECO:0000314"/>
    <property type="project" value="SynGO"/>
</dbReference>
<dbReference type="GO" id="GO:0048471">
    <property type="term" value="C:perinuclear region of cytoplasm"/>
    <property type="evidence" value="ECO:0000250"/>
    <property type="project" value="UniProtKB"/>
</dbReference>
<dbReference type="GO" id="GO:0045202">
    <property type="term" value="C:synapse"/>
    <property type="evidence" value="ECO:0000314"/>
    <property type="project" value="SynGO"/>
</dbReference>
<dbReference type="GO" id="GO:0005509">
    <property type="term" value="F:calcium ion binding"/>
    <property type="evidence" value="ECO:0000250"/>
    <property type="project" value="UniProtKB"/>
</dbReference>
<dbReference type="GO" id="GO:0042802">
    <property type="term" value="F:identical protein binding"/>
    <property type="evidence" value="ECO:0000353"/>
    <property type="project" value="MGI"/>
</dbReference>
<dbReference type="GO" id="GO:0042803">
    <property type="term" value="F:protein homodimerization activity"/>
    <property type="evidence" value="ECO:0000314"/>
    <property type="project" value="UniProtKB"/>
</dbReference>
<dbReference type="GO" id="GO:0030183">
    <property type="term" value="P:B cell differentiation"/>
    <property type="evidence" value="ECO:0000250"/>
    <property type="project" value="UniProtKB"/>
</dbReference>
<dbReference type="GO" id="GO:0008284">
    <property type="term" value="P:positive regulation of cell population proliferation"/>
    <property type="evidence" value="ECO:0000314"/>
    <property type="project" value="MGI"/>
</dbReference>
<dbReference type="InterPro" id="IPR007327">
    <property type="entry name" value="TPD52"/>
</dbReference>
<dbReference type="PANTHER" id="PTHR19307">
    <property type="entry name" value="TUMOR PROTEIN D52"/>
    <property type="match status" value="1"/>
</dbReference>
<dbReference type="PANTHER" id="PTHR19307:SF12">
    <property type="entry name" value="TUMOR PROTEIN D52"/>
    <property type="match status" value="1"/>
</dbReference>
<dbReference type="Pfam" id="PF04201">
    <property type="entry name" value="TPD52"/>
    <property type="match status" value="1"/>
</dbReference>